<name>RF1_PARP8</name>
<reference key="1">
    <citation type="journal article" date="2014" name="Stand. Genomic Sci.">
        <title>Complete genome sequence of Burkholderia phymatum STM815(T), a broad host range and efficient nitrogen-fixing symbiont of Mimosa species.</title>
        <authorList>
            <person name="Moulin L."/>
            <person name="Klonowska A."/>
            <person name="Caroline B."/>
            <person name="Booth K."/>
            <person name="Vriezen J.A."/>
            <person name="Melkonian R."/>
            <person name="James E.K."/>
            <person name="Young J.P."/>
            <person name="Bena G."/>
            <person name="Hauser L."/>
            <person name="Land M."/>
            <person name="Kyrpides N."/>
            <person name="Bruce D."/>
            <person name="Chain P."/>
            <person name="Copeland A."/>
            <person name="Pitluck S."/>
            <person name="Woyke T."/>
            <person name="Lizotte-Waniewski M."/>
            <person name="Bristow J."/>
            <person name="Riley M."/>
        </authorList>
    </citation>
    <scope>NUCLEOTIDE SEQUENCE [LARGE SCALE GENOMIC DNA]</scope>
    <source>
        <strain>DSM 17167 / CIP 108236 / LMG 21445 / STM815</strain>
    </source>
</reference>
<protein>
    <recommendedName>
        <fullName evidence="1">Peptide chain release factor 1</fullName>
        <shortName evidence="1">RF-1</shortName>
    </recommendedName>
</protein>
<organism>
    <name type="scientific">Paraburkholderia phymatum (strain DSM 17167 / CIP 108236 / LMG 21445 / STM815)</name>
    <name type="common">Burkholderia phymatum</name>
    <dbReference type="NCBI Taxonomy" id="391038"/>
    <lineage>
        <taxon>Bacteria</taxon>
        <taxon>Pseudomonadati</taxon>
        <taxon>Pseudomonadota</taxon>
        <taxon>Betaproteobacteria</taxon>
        <taxon>Burkholderiales</taxon>
        <taxon>Burkholderiaceae</taxon>
        <taxon>Paraburkholderia</taxon>
    </lineage>
</organism>
<accession>B2JHK8</accession>
<feature type="chain" id="PRO_1000093433" description="Peptide chain release factor 1">
    <location>
        <begin position="1"/>
        <end position="360"/>
    </location>
</feature>
<feature type="modified residue" description="N5-methylglutamine" evidence="1">
    <location>
        <position position="235"/>
    </location>
</feature>
<comment type="function">
    <text evidence="1">Peptide chain release factor 1 directs the termination of translation in response to the peptide chain termination codons UAG and UAA.</text>
</comment>
<comment type="subcellular location">
    <subcellularLocation>
        <location evidence="1">Cytoplasm</location>
    </subcellularLocation>
</comment>
<comment type="PTM">
    <text evidence="1">Methylated by PrmC. Methylation increases the termination efficiency of RF1.</text>
</comment>
<comment type="similarity">
    <text evidence="1">Belongs to the prokaryotic/mitochondrial release factor family.</text>
</comment>
<evidence type="ECO:0000255" key="1">
    <source>
        <dbReference type="HAMAP-Rule" id="MF_00093"/>
    </source>
</evidence>
<keyword id="KW-0963">Cytoplasm</keyword>
<keyword id="KW-0488">Methylation</keyword>
<keyword id="KW-0648">Protein biosynthesis</keyword>
<keyword id="KW-1185">Reference proteome</keyword>
<dbReference type="EMBL" id="CP001043">
    <property type="protein sequence ID" value="ACC71893.1"/>
    <property type="molecule type" value="Genomic_DNA"/>
</dbReference>
<dbReference type="RefSeq" id="WP_012402092.1">
    <property type="nucleotide sequence ID" value="NC_010622.1"/>
</dbReference>
<dbReference type="SMR" id="B2JHK8"/>
<dbReference type="STRING" id="391038.Bphy_2721"/>
<dbReference type="KEGG" id="bph:Bphy_2721"/>
<dbReference type="eggNOG" id="COG0216">
    <property type="taxonomic scope" value="Bacteria"/>
</dbReference>
<dbReference type="HOGENOM" id="CLU_036856_0_1_4"/>
<dbReference type="OrthoDB" id="9806673at2"/>
<dbReference type="Proteomes" id="UP000001192">
    <property type="component" value="Chromosome 1"/>
</dbReference>
<dbReference type="GO" id="GO:0005737">
    <property type="term" value="C:cytoplasm"/>
    <property type="evidence" value="ECO:0007669"/>
    <property type="project" value="UniProtKB-SubCell"/>
</dbReference>
<dbReference type="GO" id="GO:0016149">
    <property type="term" value="F:translation release factor activity, codon specific"/>
    <property type="evidence" value="ECO:0007669"/>
    <property type="project" value="UniProtKB-UniRule"/>
</dbReference>
<dbReference type="FunFam" id="3.30.160.20:FF:000004">
    <property type="entry name" value="Peptide chain release factor 1"/>
    <property type="match status" value="1"/>
</dbReference>
<dbReference type="FunFam" id="3.30.70.1660:FF:000002">
    <property type="entry name" value="Peptide chain release factor 1"/>
    <property type="match status" value="1"/>
</dbReference>
<dbReference type="FunFam" id="3.30.70.1660:FF:000004">
    <property type="entry name" value="Peptide chain release factor 1"/>
    <property type="match status" value="1"/>
</dbReference>
<dbReference type="Gene3D" id="3.30.160.20">
    <property type="match status" value="1"/>
</dbReference>
<dbReference type="Gene3D" id="3.30.70.1660">
    <property type="match status" value="2"/>
</dbReference>
<dbReference type="Gene3D" id="6.10.140.1950">
    <property type="match status" value="1"/>
</dbReference>
<dbReference type="HAMAP" id="MF_00093">
    <property type="entry name" value="Rel_fac_1"/>
    <property type="match status" value="1"/>
</dbReference>
<dbReference type="InterPro" id="IPR005139">
    <property type="entry name" value="PCRF"/>
</dbReference>
<dbReference type="InterPro" id="IPR000352">
    <property type="entry name" value="Pep_chain_release_fac_I"/>
</dbReference>
<dbReference type="InterPro" id="IPR045853">
    <property type="entry name" value="Pep_chain_release_fac_I_sf"/>
</dbReference>
<dbReference type="InterPro" id="IPR050057">
    <property type="entry name" value="Prokaryotic/Mito_RF"/>
</dbReference>
<dbReference type="InterPro" id="IPR004373">
    <property type="entry name" value="RF-1"/>
</dbReference>
<dbReference type="NCBIfam" id="TIGR00019">
    <property type="entry name" value="prfA"/>
    <property type="match status" value="1"/>
</dbReference>
<dbReference type="NCBIfam" id="NF001859">
    <property type="entry name" value="PRK00591.1"/>
    <property type="match status" value="1"/>
</dbReference>
<dbReference type="PANTHER" id="PTHR43804">
    <property type="entry name" value="LD18447P"/>
    <property type="match status" value="1"/>
</dbReference>
<dbReference type="PANTHER" id="PTHR43804:SF7">
    <property type="entry name" value="LD18447P"/>
    <property type="match status" value="1"/>
</dbReference>
<dbReference type="Pfam" id="PF03462">
    <property type="entry name" value="PCRF"/>
    <property type="match status" value="1"/>
</dbReference>
<dbReference type="Pfam" id="PF00472">
    <property type="entry name" value="RF-1"/>
    <property type="match status" value="1"/>
</dbReference>
<dbReference type="SMART" id="SM00937">
    <property type="entry name" value="PCRF"/>
    <property type="match status" value="1"/>
</dbReference>
<dbReference type="SUPFAM" id="SSF75620">
    <property type="entry name" value="Release factor"/>
    <property type="match status" value="1"/>
</dbReference>
<dbReference type="PROSITE" id="PS00745">
    <property type="entry name" value="RF_PROK_I"/>
    <property type="match status" value="1"/>
</dbReference>
<gene>
    <name evidence="1" type="primary">prfA</name>
    <name type="ordered locus">Bphy_2721</name>
</gene>
<proteinExistence type="inferred from homology"/>
<sequence length="360" mass="40555">MKTSMQAKLDQLTTRLAELNDLLSREDITSNIDQYRKLTREHAELQPVVEQYGLWRQTMNDAATAQELLSDASMKDFAEEEIRASRERMETLESELQKMLLPKDPNDDRNIFLEIRAGTGGDESALFAGDLLRMYLRYAERNRWQVEMMSASESDLGGYKEVIVRIAGEAAYSKLKFESGGHRVQRVPATETQGRIHTSACTVAVMPEADEIGEVEINPADLRIDTFRASGAGGQHINKTDSAVRVTHLPTGIVVECQDDRSQHKNKDRALKVLAARIKDKQYHEQHAKEAATRKSLIGSGDRSERIRTYNFPQGRLTDHRINLTLYRLESIMEGDLDELIAALVSEHQAELLASLGDAD</sequence>